<sequence>MKNVLSIQSHVIYGHAGNSAAVFPMQRLGVNVWPLNTVQLSNHMQYGHWAGSAIDAAKMEQLVDGIAAIGALKRCDAVLSGFLGSPAQARAAVEIVRTVKATNPNAWYFCDPAMGQTGGIRPEPGVEEFIVAELPELADGMAPNHSELQKLAGQRIETVAEAVAACRSIIRRSPQVILVKHLHDRNSPADRFNMLVVTETEAWIGQRPLYAFPRHPVGVGDLTSAIFVARRLRGDSVRAAFEHTLAAVHAVVKATYDARRYELELVAAQDEIARPSEWFGAWVTGAD</sequence>
<evidence type="ECO:0000255" key="1">
    <source>
        <dbReference type="HAMAP-Rule" id="MF_01639"/>
    </source>
</evidence>
<gene>
    <name evidence="1" type="primary">pdxY</name>
    <name type="ordered locus">BMA0582</name>
</gene>
<dbReference type="EC" id="2.7.1.35" evidence="1"/>
<dbReference type="EMBL" id="CP000010">
    <property type="protein sequence ID" value="AAU49307.1"/>
    <property type="molecule type" value="Genomic_DNA"/>
</dbReference>
<dbReference type="RefSeq" id="WP_004199376.1">
    <property type="nucleotide sequence ID" value="NC_006348.1"/>
</dbReference>
<dbReference type="RefSeq" id="YP_102373.1">
    <property type="nucleotide sequence ID" value="NC_006348.1"/>
</dbReference>
<dbReference type="SMR" id="Q62LP6"/>
<dbReference type="GeneID" id="92978350"/>
<dbReference type="KEGG" id="bma:BMA0582"/>
<dbReference type="PATRIC" id="fig|243160.12.peg.596"/>
<dbReference type="eggNOG" id="COG2240">
    <property type="taxonomic scope" value="Bacteria"/>
</dbReference>
<dbReference type="HOGENOM" id="CLU_046496_3_0_4"/>
<dbReference type="UniPathway" id="UPA01068">
    <property type="reaction ID" value="UER00298"/>
</dbReference>
<dbReference type="Proteomes" id="UP000006693">
    <property type="component" value="Chromosome 1"/>
</dbReference>
<dbReference type="GO" id="GO:0005829">
    <property type="term" value="C:cytosol"/>
    <property type="evidence" value="ECO:0007669"/>
    <property type="project" value="TreeGrafter"/>
</dbReference>
<dbReference type="GO" id="GO:0005524">
    <property type="term" value="F:ATP binding"/>
    <property type="evidence" value="ECO:0007669"/>
    <property type="project" value="UniProtKB-UniRule"/>
</dbReference>
<dbReference type="GO" id="GO:0000287">
    <property type="term" value="F:magnesium ion binding"/>
    <property type="evidence" value="ECO:0007669"/>
    <property type="project" value="UniProtKB-UniRule"/>
</dbReference>
<dbReference type="GO" id="GO:0008478">
    <property type="term" value="F:pyridoxal kinase activity"/>
    <property type="evidence" value="ECO:0007669"/>
    <property type="project" value="UniProtKB-UniRule"/>
</dbReference>
<dbReference type="GO" id="GO:0009443">
    <property type="term" value="P:pyridoxal 5'-phosphate salvage"/>
    <property type="evidence" value="ECO:0007669"/>
    <property type="project" value="UniProtKB-UniRule"/>
</dbReference>
<dbReference type="CDD" id="cd01173">
    <property type="entry name" value="pyridoxal_pyridoxamine_kinase"/>
    <property type="match status" value="1"/>
</dbReference>
<dbReference type="FunFam" id="3.40.1190.20:FF:000008">
    <property type="entry name" value="Pyridoxal kinase PdxY"/>
    <property type="match status" value="1"/>
</dbReference>
<dbReference type="Gene3D" id="3.40.1190.20">
    <property type="match status" value="1"/>
</dbReference>
<dbReference type="HAMAP" id="MF_01639">
    <property type="entry name" value="PdxY"/>
    <property type="match status" value="1"/>
</dbReference>
<dbReference type="InterPro" id="IPR013749">
    <property type="entry name" value="PM/HMP-P_kinase-1"/>
</dbReference>
<dbReference type="InterPro" id="IPR004625">
    <property type="entry name" value="PyrdxlKinase"/>
</dbReference>
<dbReference type="InterPro" id="IPR023685">
    <property type="entry name" value="Pyridoxal_kinase_PdxY"/>
</dbReference>
<dbReference type="InterPro" id="IPR029056">
    <property type="entry name" value="Ribokinase-like"/>
</dbReference>
<dbReference type="NCBIfam" id="NF004398">
    <property type="entry name" value="PRK05756.1"/>
    <property type="match status" value="1"/>
</dbReference>
<dbReference type="NCBIfam" id="TIGR00687">
    <property type="entry name" value="pyridox_kin"/>
    <property type="match status" value="1"/>
</dbReference>
<dbReference type="PANTHER" id="PTHR10534">
    <property type="entry name" value="PYRIDOXAL KINASE"/>
    <property type="match status" value="1"/>
</dbReference>
<dbReference type="PANTHER" id="PTHR10534:SF2">
    <property type="entry name" value="PYRIDOXAL KINASE"/>
    <property type="match status" value="1"/>
</dbReference>
<dbReference type="Pfam" id="PF08543">
    <property type="entry name" value="Phos_pyr_kin"/>
    <property type="match status" value="1"/>
</dbReference>
<dbReference type="SUPFAM" id="SSF53613">
    <property type="entry name" value="Ribokinase-like"/>
    <property type="match status" value="1"/>
</dbReference>
<organism>
    <name type="scientific">Burkholderia mallei (strain ATCC 23344)</name>
    <dbReference type="NCBI Taxonomy" id="243160"/>
    <lineage>
        <taxon>Bacteria</taxon>
        <taxon>Pseudomonadati</taxon>
        <taxon>Pseudomonadota</taxon>
        <taxon>Betaproteobacteria</taxon>
        <taxon>Burkholderiales</taxon>
        <taxon>Burkholderiaceae</taxon>
        <taxon>Burkholderia</taxon>
        <taxon>pseudomallei group</taxon>
    </lineage>
</organism>
<keyword id="KW-0067">ATP-binding</keyword>
<keyword id="KW-0418">Kinase</keyword>
<keyword id="KW-0460">Magnesium</keyword>
<keyword id="KW-0547">Nucleotide-binding</keyword>
<keyword id="KW-1185">Reference proteome</keyword>
<keyword id="KW-0808">Transferase</keyword>
<name>PDXY_BURMA</name>
<feature type="chain" id="PRO_0000269797" description="Pyridoxal kinase PdxY">
    <location>
        <begin position="1"/>
        <end position="287"/>
    </location>
</feature>
<feature type="binding site" evidence="1">
    <location>
        <position position="9"/>
    </location>
    <ligand>
        <name>substrate</name>
    </ligand>
</feature>
<feature type="binding site" evidence="1">
    <location>
        <begin position="44"/>
        <end position="45"/>
    </location>
    <ligand>
        <name>substrate</name>
    </ligand>
</feature>
<feature type="binding site" evidence="1">
    <location>
        <position position="111"/>
    </location>
    <ligand>
        <name>ATP</name>
        <dbReference type="ChEBI" id="CHEBI:30616"/>
    </ligand>
</feature>
<feature type="binding site" evidence="1">
    <location>
        <position position="142"/>
    </location>
    <ligand>
        <name>ATP</name>
        <dbReference type="ChEBI" id="CHEBI:30616"/>
    </ligand>
</feature>
<feature type="binding site" evidence="1">
    <location>
        <position position="147"/>
    </location>
    <ligand>
        <name>ATP</name>
        <dbReference type="ChEBI" id="CHEBI:30616"/>
    </ligand>
</feature>
<feature type="binding site" evidence="1">
    <location>
        <position position="180"/>
    </location>
    <ligand>
        <name>ATP</name>
        <dbReference type="ChEBI" id="CHEBI:30616"/>
    </ligand>
</feature>
<feature type="binding site" evidence="1">
    <location>
        <position position="221"/>
    </location>
    <ligand>
        <name>substrate</name>
    </ligand>
</feature>
<proteinExistence type="inferred from homology"/>
<protein>
    <recommendedName>
        <fullName evidence="1">Pyridoxal kinase PdxY</fullName>
        <shortName evidence="1">PL kinase</shortName>
        <ecNumber evidence="1">2.7.1.35</ecNumber>
    </recommendedName>
</protein>
<accession>Q62LP6</accession>
<reference key="1">
    <citation type="journal article" date="2004" name="Proc. Natl. Acad. Sci. U.S.A.">
        <title>Structural flexibility in the Burkholderia mallei genome.</title>
        <authorList>
            <person name="Nierman W.C."/>
            <person name="DeShazer D."/>
            <person name="Kim H.S."/>
            <person name="Tettelin H."/>
            <person name="Nelson K.E."/>
            <person name="Feldblyum T.V."/>
            <person name="Ulrich R.L."/>
            <person name="Ronning C.M."/>
            <person name="Brinkac L.M."/>
            <person name="Daugherty S.C."/>
            <person name="Davidsen T.D."/>
            <person name="DeBoy R.T."/>
            <person name="Dimitrov G."/>
            <person name="Dodson R.J."/>
            <person name="Durkin A.S."/>
            <person name="Gwinn M.L."/>
            <person name="Haft D.H."/>
            <person name="Khouri H.M."/>
            <person name="Kolonay J.F."/>
            <person name="Madupu R."/>
            <person name="Mohammoud Y."/>
            <person name="Nelson W.C."/>
            <person name="Radune D."/>
            <person name="Romero C.M."/>
            <person name="Sarria S."/>
            <person name="Selengut J."/>
            <person name="Shamblin C."/>
            <person name="Sullivan S.A."/>
            <person name="White O."/>
            <person name="Yu Y."/>
            <person name="Zafar N."/>
            <person name="Zhou L."/>
            <person name="Fraser C.M."/>
        </authorList>
    </citation>
    <scope>NUCLEOTIDE SEQUENCE [LARGE SCALE GENOMIC DNA]</scope>
    <source>
        <strain>ATCC 23344</strain>
    </source>
</reference>
<comment type="function">
    <text evidence="1">Pyridoxal kinase involved in the salvage pathway of pyridoxal 5'-phosphate (PLP). Catalyzes the phosphorylation of pyridoxal to PLP.</text>
</comment>
<comment type="catalytic activity">
    <reaction evidence="1">
        <text>pyridoxal + ATP = pyridoxal 5'-phosphate + ADP + H(+)</text>
        <dbReference type="Rhea" id="RHEA:10224"/>
        <dbReference type="ChEBI" id="CHEBI:15378"/>
        <dbReference type="ChEBI" id="CHEBI:17310"/>
        <dbReference type="ChEBI" id="CHEBI:30616"/>
        <dbReference type="ChEBI" id="CHEBI:456216"/>
        <dbReference type="ChEBI" id="CHEBI:597326"/>
        <dbReference type="EC" id="2.7.1.35"/>
    </reaction>
</comment>
<comment type="cofactor">
    <cofactor evidence="1">
        <name>Mg(2+)</name>
        <dbReference type="ChEBI" id="CHEBI:18420"/>
    </cofactor>
</comment>
<comment type="pathway">
    <text evidence="1">Cofactor metabolism; pyridoxal 5'-phosphate salvage; pyridoxal 5'-phosphate from pyridoxal: step 1/1.</text>
</comment>
<comment type="subunit">
    <text evidence="1">Homodimer.</text>
</comment>
<comment type="similarity">
    <text evidence="1">Belongs to the pyridoxine kinase family. PdxY subfamily.</text>
</comment>